<sequence length="144" mass="16090">MRFTPAIVIAAFCSLAVAAPAAKAIARSPSEAVEDYVIPIDKKRGEAVEDYVIPIDKKRGEAVEDYVIPFDKRGEAVEDYVIPIDKKRGEAVEDYVIPFDKRGEAVEDYVIPIDKKRGEAVEDYVIPFDKRGEAVEDYVIPIDK</sequence>
<evidence type="ECO:0000255" key="1"/>
<evidence type="ECO:0000269" key="2">
    <source>
    </source>
</evidence>
<evidence type="ECO:0000269" key="3">
    <source>
    </source>
</evidence>
<evidence type="ECO:0000303" key="4">
    <source>
    </source>
</evidence>
<evidence type="ECO:0000303" key="5">
    <source>
    </source>
</evidence>
<evidence type="ECO:0000305" key="6">
    <source>
    </source>
</evidence>
<evidence type="ECO:0000305" key="7">
    <source>
    </source>
</evidence>
<gene>
    <name evidence="5" type="primary">phomA'</name>
    <name evidence="4" type="synonym">phomA</name>
</gene>
<name>PHOA2_DIALO</name>
<dbReference type="EMBL" id="KU645834">
    <property type="protein sequence ID" value="AMR44282.1"/>
    <property type="molecule type" value="Genomic_DNA"/>
</dbReference>
<comment type="function">
    <text evidence="2 3">Ribosomally synthesized cyclic peptide phomopsin precursor; part of the gene cluster that mediates the biosynthesis of the phomopsins, a group of hexapeptide mycotoxins which infects lupins and causes lupinosis disease in livestock (PubMed:26979951, PubMed:34608734). The phomA' translated product contains a 5-fold repeated peptide embedding the hexapeptide Tyr-Val-Ile-Pro-Ile-Asp and a 3-fold repeated peptide embedding the hexapeptide Tyr-Val-Ile-Pro-Phe-Asp, that is converted into phomapsin A and phomapsin P, respectively (PubMed:26979951, PubMed:34608734). After being excised from the precursor peptide by kexin proteases, the core peptides are cyclized and modified post-translationally by enzymes encoded within the corresponding gene cluster (PubMed:26979951, PubMed:34608734).</text>
</comment>
<comment type="pathway">
    <text evidence="3">Mycotoxin biosynthesis.</text>
</comment>
<comment type="PTM">
    <text evidence="3 6">PhomA' is processed by several endopeptidases including kexin proteases as well as the cluster-specific S41 family peptidase phomP1' and the peptidase phomG' to produce 5 identical copies of the hexapeptide Tyr-Val-Ile-Pro-Ile-Asp and 3 identical copies of Tyr-Val-Ile-Pro-Phe-Asp, that are further modified into phomapsins A and P, respectively (Probable). The timing and order of proteolysis of the phomA' precursor and PTMs are still unknown. Two tyrosinase-like enzyme phomQ1' and PhomQ2, catalyze the chlorination and hydroxylation of Tyr, respectively. PhomYb', is proposed to be involved in the construction of the macrocyclic structure. The other four ustYa family proteins may be involved in PTMs that generate the unique structure of phomopsin A. PhomYa' is required for the hydroxylation of C-beta of Tyr. PhomYc', PhomYd', and PhomYe' are responsible for the biosynthesis of 2,3-dehydroisoleucine (dIle), 2,3-dehydroaspartic acid (dAsp), and 3,4-dehydroproline (dPro), respectively. While dIle formation by phomYc is indispensable for the installation of dAsp by phomYd, the order of the other PTMs have not been elucidated yet. Most of the biosynthetic enzymes likely have broad substrate specificity, and thus, there might be a metabolic grid from a precursor to phomopsin A. The enzyme(s) responsible for the biosynthesis of 3,4-dehydrovaline (dVal) have also not been identified yet. Finally, PhomM' acts as an S-adenosylmethionine-dependent alpha-N-methyltransferase that catalyzes two successive N-methylation reactions, converting N-desmethyl-phomopsin A to phomopsin A and phomopsin A further to an N,N-dimethylated congener called phomopsin E (PubMed:34608734).</text>
</comment>
<accession>A0A142I730</accession>
<organism>
    <name type="scientific">Diaporthe leptostromiformis</name>
    <name type="common">Lupinosis disease fungus</name>
    <name type="synonym">Phomopsis leptostromiformis</name>
    <dbReference type="NCBI Taxonomy" id="291059"/>
    <lineage>
        <taxon>Eukaryota</taxon>
        <taxon>Fungi</taxon>
        <taxon>Dikarya</taxon>
        <taxon>Ascomycota</taxon>
        <taxon>Pezizomycotina</taxon>
        <taxon>Sordariomycetes</taxon>
        <taxon>Sordariomycetidae</taxon>
        <taxon>Diaporthales</taxon>
        <taxon>Diaporthaceae</taxon>
        <taxon>Diaporthe</taxon>
    </lineage>
</organism>
<keyword id="KW-0677">Repeat</keyword>
<keyword id="KW-0732">Signal</keyword>
<keyword id="KW-0843">Virulence</keyword>
<proteinExistence type="inferred from homology"/>
<feature type="signal peptide" evidence="1">
    <location>
        <begin position="1"/>
        <end position="18"/>
    </location>
</feature>
<feature type="propeptide" id="PRO_0000458312" evidence="7">
    <location>
        <begin position="19"/>
        <end position="35"/>
    </location>
</feature>
<feature type="peptide" id="PRO_5007497134" description="YVIPID-I" evidence="7">
    <location>
        <begin position="36"/>
        <end position="41"/>
    </location>
</feature>
<feature type="propeptide" id="PRO_0000458313" evidence="7">
    <location>
        <begin position="42"/>
        <end position="50"/>
    </location>
</feature>
<feature type="peptide" id="PRO_0000458314" description="YVIPID-II" evidence="7">
    <location>
        <begin position="51"/>
        <end position="56"/>
    </location>
</feature>
<feature type="propeptide" id="PRO_0000458315" evidence="7">
    <location>
        <begin position="57"/>
        <end position="65"/>
    </location>
</feature>
<feature type="peptide" id="PRO_0000458316" description="YVIPFD-I" evidence="7">
    <location>
        <begin position="66"/>
        <end position="71"/>
    </location>
</feature>
<feature type="propeptide" id="PRO_0000458317" evidence="7">
    <location>
        <begin position="72"/>
        <end position="79"/>
    </location>
</feature>
<feature type="peptide" id="PRO_0000458318" description="YVIPID-III" evidence="7">
    <location>
        <begin position="80"/>
        <end position="85"/>
    </location>
</feature>
<feature type="propeptide" id="PRO_0000458319" evidence="7">
    <location>
        <begin position="86"/>
        <end position="94"/>
    </location>
</feature>
<feature type="peptide" id="PRO_0000458320" description="YVIPFD-II" evidence="7">
    <location>
        <begin position="95"/>
        <end position="100"/>
    </location>
</feature>
<feature type="propeptide" id="PRO_0000458321" evidence="7">
    <location>
        <begin position="101"/>
        <end position="108"/>
    </location>
</feature>
<feature type="peptide" id="PRO_0000458322" description="YVIPID-IV" evidence="7">
    <location>
        <begin position="109"/>
        <end position="114"/>
    </location>
</feature>
<feature type="propeptide" id="PRO_0000458323" evidence="7">
    <location>
        <begin position="115"/>
        <end position="123"/>
    </location>
</feature>
<feature type="peptide" id="PRO_0000458324" description="YVIPFD-III" evidence="7">
    <location>
        <begin position="124"/>
        <end position="129"/>
    </location>
</feature>
<feature type="propeptide" id="PRO_0000458325" evidence="7">
    <location>
        <begin position="130"/>
        <end position="137"/>
    </location>
</feature>
<feature type="peptide" id="PRO_0000458326" description="YVIPID-V" evidence="7">
    <location>
        <begin position="138"/>
        <end position="143"/>
    </location>
</feature>
<feature type="propeptide" id="PRO_0000458327" evidence="7">
    <location>
        <position position="144"/>
    </location>
</feature>
<reference key="1">
    <citation type="journal article" date="2016" name="Proc. Natl. Acad. Sci. U.S.A.">
        <title>Biosynthetic investigation of phomopsins reveals a widespread pathway for ribosomal natural products in Ascomycetes.</title>
        <authorList>
            <person name="Ding W."/>
            <person name="Liu W.Q."/>
            <person name="Jia Y."/>
            <person name="Li Y."/>
            <person name="van der Donk W.A."/>
            <person name="Zhang Q."/>
        </authorList>
    </citation>
    <scope>NUCLEOTIDE SEQUENCE [GENOMIC DNA]</scope>
    <scope>FUNCTION</scope>
    <scope>POST-TRANSLATIONAL MODIFICATIONS TO YIELD PHOMOPSINS</scope>
    <scope>PATHWAY</scope>
    <source>
        <strain>ATCC 26115 / IMI 115107 / C 1557</strain>
    </source>
</reference>
<reference key="2">
    <citation type="journal article" date="2021" name="Angew. Chem. Int. Ed.">
        <title>Biosynthetic studies of phomopsins unveil posttranslational installation of dehydroamino acids by ustYa family proteins.</title>
        <authorList>
            <person name="Sogahata K."/>
            <person name="Ozaki T."/>
            <person name="Igarashi Y."/>
            <person name="Naganuma Y."/>
            <person name="Liu C."/>
            <person name="Minami A."/>
            <person name="Oikawa H."/>
        </authorList>
    </citation>
    <scope>NOMENCLATURE</scope>
    <scope>FUNCTION</scope>
    <scope>POST-TRANSLATIONAL MODIFICATIONS TO YIELD PHOMOPSINS</scope>
    <scope>PATHWAY</scope>
    <source>
        <strain>ATCC 26115 / IMI 115107 / C 1557</strain>
    </source>
</reference>
<protein>
    <recommendedName>
        <fullName evidence="5">Ribosomally synthesized cyclic peptide phomopsin precursor phomA'</fullName>
    </recommendedName>
    <alternativeName>
        <fullName evidence="5">Phomopsin biosynthesis cluster protein A'</fullName>
    </alternativeName>
    <component>
        <recommendedName>
            <fullName evidence="5">YVIPID-I</fullName>
        </recommendedName>
    </component>
    <component>
        <recommendedName>
            <fullName evidence="5">YVIPID-II</fullName>
        </recommendedName>
    </component>
    <component>
        <recommendedName>
            <fullName evidence="5">YVIPFD-I</fullName>
        </recommendedName>
    </component>
    <component>
        <recommendedName>
            <fullName evidence="5">YVIPID-III</fullName>
        </recommendedName>
    </component>
    <component>
        <recommendedName>
            <fullName evidence="5">YVIPFD-II</fullName>
        </recommendedName>
    </component>
    <component>
        <recommendedName>
            <fullName evidence="5">YVIPID-IV</fullName>
        </recommendedName>
    </component>
    <component>
        <recommendedName>
            <fullName evidence="5">YVIPFD-III</fullName>
        </recommendedName>
    </component>
    <component>
        <recommendedName>
            <fullName evidence="5">YVIPID-V</fullName>
        </recommendedName>
    </component>
</protein>